<comment type="function">
    <text evidence="1">Adapter protein implicated in the regulation of a large spectrum of both general and specialized signaling pathways. Binds to a large number of partners, usually by recognition of a phosphoserine or phosphothreonine motif. Binding generally results in the modulation of the activity of the binding partner. Negatively regulates the kinase activity of PDPK1 (By similarity).</text>
</comment>
<comment type="subunit">
    <text evidence="2 4 5">Homodimer (By similarity). Interacts with CDKN1B ('Thr-198' phosphorylated form); the interaction translocates CDKN1B to the cytoplasm. Interacts with SSH1 (By similarity). Interacts with GAB2. Interacts with RGS7 (phosphorylated form) (By similarity). Interacts with CDK16 (PubMed:9197417). Interacts with the 'Ser-241' phosphorylated form of PDPK1 (By similarity). Interacts with the 'Thr-369' phosphorylated form of DAPK2 (PubMed:26047703). Interacts with PI4KB, TBC1D22A and TBC1D22B (By similarity). Interacts with SLITRK1 (By similarity). Interacts with RIPOR2 (By similarity). Interacts with INAVA; the interaction increases upon PRR (pattern recognition receptor) stimulation and is required for cellular signaling pathway activation and cytokine secretion (By similarity). Interacts with MARK2, MARK3 and MARK4 (By similarity). Interacts with MEFV (By similarity).</text>
</comment>
<comment type="interaction">
    <interactant intactId="EBI-400675">
        <id>P68254</id>
    </interactant>
    <interactant intactId="EBI-298630">
        <id>P23242</id>
        <label>Gja1</label>
    </interactant>
    <organismsDiffer>false</organismsDiffer>
    <experiments>3</experiments>
</comment>
<comment type="interaction">
    <interactant intactId="EBI-400675">
        <id>P68254</id>
    </interactant>
    <interactant intactId="EBI-6477055">
        <id>P11688</id>
        <label>Itga5</label>
    </interactant>
    <organismsDiffer>false</organismsDiffer>
    <experiments>2</experiments>
</comment>
<comment type="interaction">
    <interactant intactId="EBI-400675">
        <id>P68254</id>
    </interactant>
    <interactant intactId="EBI-2693710">
        <id>Q5S006</id>
        <label>Lrrk2</label>
    </interactant>
    <organismsDiffer>false</organismsDiffer>
    <experiments>4</experiments>
</comment>
<comment type="subcellular location">
    <subcellularLocation>
        <location>Cytoplasm</location>
    </subcellularLocation>
</comment>
<comment type="alternative products">
    <event type="alternative splicing"/>
    <isoform>
        <id>P68254-1</id>
        <name>1</name>
        <sequence type="displayed"/>
    </isoform>
    <isoform>
        <id>P68254-2</id>
        <name>2</name>
        <sequence type="described" ref="VSP_016340"/>
    </isoform>
</comment>
<comment type="similarity">
    <text evidence="7">Belongs to the 14-3-3 family.</text>
</comment>
<comment type="sequence caution" evidence="7">
    <conflict type="erroneous initiation">
        <sequence resource="EMBL-CDS" id="AAH80802"/>
    </conflict>
    <text>Extended N-terminus.</text>
</comment>
<comment type="sequence caution" evidence="7">
    <conflict type="erroneous initiation">
        <sequence resource="EMBL-CDS" id="AAH85299"/>
    </conflict>
    <text>Extended N-terminus.</text>
</comment>
<dbReference type="EMBL" id="U57312">
    <property type="protein sequence ID" value="AAC53257.1"/>
    <property type="molecule type" value="mRNA"/>
</dbReference>
<dbReference type="EMBL" id="U56243">
    <property type="protein sequence ID" value="AAB72023.1"/>
    <property type="molecule type" value="mRNA"/>
</dbReference>
<dbReference type="EMBL" id="D87662">
    <property type="protein sequence ID" value="BAA13423.1"/>
    <property type="molecule type" value="mRNA"/>
</dbReference>
<dbReference type="EMBL" id="AK145568">
    <property type="protein sequence ID" value="BAE26517.1"/>
    <property type="molecule type" value="mRNA"/>
</dbReference>
<dbReference type="EMBL" id="AK146371">
    <property type="protein sequence ID" value="BAE27120.1"/>
    <property type="molecule type" value="mRNA"/>
</dbReference>
<dbReference type="EMBL" id="AK150850">
    <property type="protein sequence ID" value="BAE29907.1"/>
    <property type="molecule type" value="mRNA"/>
</dbReference>
<dbReference type="EMBL" id="AK151437">
    <property type="protein sequence ID" value="BAE30400.1"/>
    <property type="molecule type" value="mRNA"/>
</dbReference>
<dbReference type="EMBL" id="AK151715">
    <property type="protein sequence ID" value="BAE30634.1"/>
    <property type="molecule type" value="mRNA"/>
</dbReference>
<dbReference type="EMBL" id="AK151864">
    <property type="protein sequence ID" value="BAE30752.1"/>
    <property type="molecule type" value="mRNA"/>
</dbReference>
<dbReference type="EMBL" id="AK159403">
    <property type="protein sequence ID" value="BAE35055.1"/>
    <property type="molecule type" value="mRNA"/>
</dbReference>
<dbReference type="EMBL" id="AK159817">
    <property type="protein sequence ID" value="BAE35397.1"/>
    <property type="molecule type" value="mRNA"/>
</dbReference>
<dbReference type="EMBL" id="AK163237">
    <property type="protein sequence ID" value="BAE37249.1"/>
    <property type="molecule type" value="mRNA"/>
</dbReference>
<dbReference type="EMBL" id="AK167397">
    <property type="protein sequence ID" value="BAE39486.1"/>
    <property type="molecule type" value="mRNA"/>
</dbReference>
<dbReference type="EMBL" id="AL929409">
    <property type="status" value="NOT_ANNOTATED_CDS"/>
    <property type="molecule type" value="Genomic_DNA"/>
</dbReference>
<dbReference type="EMBL" id="BC080802">
    <property type="protein sequence ID" value="AAH80802.1"/>
    <property type="status" value="ALT_INIT"/>
    <property type="molecule type" value="mRNA"/>
</dbReference>
<dbReference type="EMBL" id="BC085299">
    <property type="protein sequence ID" value="AAH85299.1"/>
    <property type="status" value="ALT_INIT"/>
    <property type="molecule type" value="mRNA"/>
</dbReference>
<dbReference type="EMBL" id="BC090838">
    <property type="protein sequence ID" value="AAH90838.1"/>
    <property type="molecule type" value="mRNA"/>
</dbReference>
<dbReference type="EMBL" id="BC106164">
    <property type="protein sequence ID" value="AAI06165.1"/>
    <property type="molecule type" value="mRNA"/>
</dbReference>
<dbReference type="CCDS" id="CCDS25837.1">
    <molecule id="P68254-1"/>
</dbReference>
<dbReference type="RefSeq" id="NP_035869.1">
    <molecule id="P68254-1"/>
    <property type="nucleotide sequence ID" value="NM_011739.3"/>
</dbReference>
<dbReference type="SMR" id="P68254"/>
<dbReference type="BioGRID" id="204622">
    <property type="interactions" value="72"/>
</dbReference>
<dbReference type="CORUM" id="P68254"/>
<dbReference type="ELM" id="P68254"/>
<dbReference type="FunCoup" id="P68254">
    <property type="interactions" value="2957"/>
</dbReference>
<dbReference type="IntAct" id="P68254">
    <property type="interactions" value="34"/>
</dbReference>
<dbReference type="MINT" id="P68254"/>
<dbReference type="STRING" id="10090.ENSMUSP00000123605"/>
<dbReference type="GlyGen" id="P68254">
    <property type="glycosylation" value="2 sites, 1 N-linked glycan (1 site), 1 O-linked glycan (1 site)"/>
</dbReference>
<dbReference type="iPTMnet" id="P68254"/>
<dbReference type="PhosphoSitePlus" id="P68254"/>
<dbReference type="SwissPalm" id="P68254"/>
<dbReference type="REPRODUCTION-2DPAGE" id="P68254"/>
<dbReference type="CPTAC" id="non-CPTAC-3627"/>
<dbReference type="jPOST" id="P68254"/>
<dbReference type="PaxDb" id="10090-ENSMUSP00000100067"/>
<dbReference type="PeptideAtlas" id="P68254"/>
<dbReference type="ProteomicsDB" id="285981">
    <molecule id="P68254-1"/>
</dbReference>
<dbReference type="ProteomicsDB" id="285982">
    <molecule id="P68254-2"/>
</dbReference>
<dbReference type="Pumba" id="P68254"/>
<dbReference type="Antibodypedia" id="1900">
    <property type="antibodies" value="581 antibodies from 45 providers"/>
</dbReference>
<dbReference type="DNASU" id="22630"/>
<dbReference type="Ensembl" id="ENSMUST00000103002.8">
    <molecule id="P68254-1"/>
    <property type="protein sequence ID" value="ENSMUSP00000100067.2"/>
    <property type="gene ID" value="ENSMUSG00000076432.14"/>
</dbReference>
<dbReference type="Ensembl" id="ENSMUST00000135088.9">
    <molecule id="P68254-1"/>
    <property type="protein sequence ID" value="ENSMUSP00000123605.3"/>
    <property type="gene ID" value="ENSMUSG00000076432.14"/>
</dbReference>
<dbReference type="Ensembl" id="ENSMUST00000155480.9">
    <molecule id="P68254-2"/>
    <property type="protein sequence ID" value="ENSMUSP00000117118.3"/>
    <property type="gene ID" value="ENSMUSG00000076432.14"/>
</dbReference>
<dbReference type="GeneID" id="22630"/>
<dbReference type="KEGG" id="mmu:22630"/>
<dbReference type="UCSC" id="uc007ndw.1">
    <molecule id="P68254-1"/>
    <property type="organism name" value="mouse"/>
</dbReference>
<dbReference type="UCSC" id="uc007ndx.1">
    <molecule id="P68254-2"/>
    <property type="organism name" value="mouse"/>
</dbReference>
<dbReference type="AGR" id="MGI:891963"/>
<dbReference type="CTD" id="10971"/>
<dbReference type="MGI" id="MGI:891963">
    <property type="gene designation" value="Ywhaq"/>
</dbReference>
<dbReference type="VEuPathDB" id="HostDB:ENSMUSG00000076432"/>
<dbReference type="eggNOG" id="KOG0841">
    <property type="taxonomic scope" value="Eukaryota"/>
</dbReference>
<dbReference type="GeneTree" id="ENSGT01090000260040"/>
<dbReference type="HOGENOM" id="CLU_058290_1_0_1"/>
<dbReference type="InParanoid" id="P68254"/>
<dbReference type="OMA" id="CFLMYYL"/>
<dbReference type="OrthoDB" id="10260625at2759"/>
<dbReference type="PhylomeDB" id="P68254"/>
<dbReference type="TreeFam" id="TF102002"/>
<dbReference type="Reactome" id="R-MMU-111447">
    <property type="pathway name" value="Activation of BAD and translocation to mitochondria"/>
</dbReference>
<dbReference type="Reactome" id="R-MMU-5625740">
    <property type="pathway name" value="RHO GTPases activate PKNs"/>
</dbReference>
<dbReference type="Reactome" id="R-MMU-5628897">
    <property type="pathway name" value="TP53 Regulates Metabolic Genes"/>
</dbReference>
<dbReference type="Reactome" id="R-MMU-75035">
    <property type="pathway name" value="Chk1/Chk2(Cds1) mediated inactivation of Cyclin B:Cdk1 complex"/>
</dbReference>
<dbReference type="Reactome" id="R-MMU-9614399">
    <property type="pathway name" value="Regulation of localization of FOXO transcription factors"/>
</dbReference>
<dbReference type="BioGRID-ORCS" id="22630">
    <property type="hits" value="6 hits in 92 CRISPR screens"/>
</dbReference>
<dbReference type="CD-CODE" id="CE726F99">
    <property type="entry name" value="Postsynaptic density"/>
</dbReference>
<dbReference type="ChiTaRS" id="Ywhaq">
    <property type="organism name" value="mouse"/>
</dbReference>
<dbReference type="PRO" id="PR:P68254"/>
<dbReference type="Proteomes" id="UP000000589">
    <property type="component" value="Chromosome 12"/>
</dbReference>
<dbReference type="RNAct" id="P68254">
    <property type="molecule type" value="protein"/>
</dbReference>
<dbReference type="Bgee" id="ENSMUSG00000076432">
    <property type="expression patterns" value="Expressed in urogenital fold and 248 other cell types or tissues"/>
</dbReference>
<dbReference type="ExpressionAtlas" id="P68254">
    <property type="expression patterns" value="baseline and differential"/>
</dbReference>
<dbReference type="GO" id="GO:0005829">
    <property type="term" value="C:cytosol"/>
    <property type="evidence" value="ECO:0000304"/>
    <property type="project" value="Reactome"/>
</dbReference>
<dbReference type="GO" id="GO:0005634">
    <property type="term" value="C:nucleus"/>
    <property type="evidence" value="ECO:0007669"/>
    <property type="project" value="Ensembl"/>
</dbReference>
<dbReference type="GO" id="GO:0032991">
    <property type="term" value="C:protein-containing complex"/>
    <property type="evidence" value="ECO:0000266"/>
    <property type="project" value="MGI"/>
</dbReference>
<dbReference type="GO" id="GO:0045202">
    <property type="term" value="C:synapse"/>
    <property type="evidence" value="ECO:0007669"/>
    <property type="project" value="Ensembl"/>
</dbReference>
<dbReference type="GO" id="GO:0071889">
    <property type="term" value="F:14-3-3 protein binding"/>
    <property type="evidence" value="ECO:0007669"/>
    <property type="project" value="Ensembl"/>
</dbReference>
<dbReference type="GO" id="GO:0042802">
    <property type="term" value="F:identical protein binding"/>
    <property type="evidence" value="ECO:0007669"/>
    <property type="project" value="Ensembl"/>
</dbReference>
<dbReference type="GO" id="GO:0019904">
    <property type="term" value="F:protein domain specific binding"/>
    <property type="evidence" value="ECO:0000314"/>
    <property type="project" value="MGI"/>
</dbReference>
<dbReference type="GO" id="GO:0044325">
    <property type="term" value="F:transmembrane transporter binding"/>
    <property type="evidence" value="ECO:0007669"/>
    <property type="project" value="Ensembl"/>
</dbReference>
<dbReference type="GO" id="GO:0045892">
    <property type="term" value="P:negative regulation of DNA-templated transcription"/>
    <property type="evidence" value="ECO:0007669"/>
    <property type="project" value="Ensembl"/>
</dbReference>
<dbReference type="GO" id="GO:0034766">
    <property type="term" value="P:negative regulation of monoatomic ion transmembrane transport"/>
    <property type="evidence" value="ECO:0007669"/>
    <property type="project" value="Ensembl"/>
</dbReference>
<dbReference type="GO" id="GO:0006605">
    <property type="term" value="P:protein targeting"/>
    <property type="evidence" value="ECO:0000314"/>
    <property type="project" value="MGI"/>
</dbReference>
<dbReference type="GO" id="GO:0007165">
    <property type="term" value="P:signal transduction"/>
    <property type="evidence" value="ECO:0000304"/>
    <property type="project" value="MGI"/>
</dbReference>
<dbReference type="GO" id="GO:0007264">
    <property type="term" value="P:small GTPase-mediated signal transduction"/>
    <property type="evidence" value="ECO:0000353"/>
    <property type="project" value="MGI"/>
</dbReference>
<dbReference type="CDD" id="cd10023">
    <property type="entry name" value="14-3-3_theta"/>
    <property type="match status" value="1"/>
</dbReference>
<dbReference type="FunFam" id="1.20.190.20:FF:000001">
    <property type="entry name" value="14-3-3 gamma 1"/>
    <property type="match status" value="1"/>
</dbReference>
<dbReference type="Gene3D" id="1.20.190.20">
    <property type="entry name" value="14-3-3 domain"/>
    <property type="match status" value="1"/>
</dbReference>
<dbReference type="InterPro" id="IPR000308">
    <property type="entry name" value="14-3-3"/>
</dbReference>
<dbReference type="InterPro" id="IPR023409">
    <property type="entry name" value="14-3-3_CS"/>
</dbReference>
<dbReference type="InterPro" id="IPR036815">
    <property type="entry name" value="14-3-3_dom_sf"/>
</dbReference>
<dbReference type="InterPro" id="IPR023410">
    <property type="entry name" value="14-3-3_domain"/>
</dbReference>
<dbReference type="InterPro" id="IPR042584">
    <property type="entry name" value="14-3-3_theta"/>
</dbReference>
<dbReference type="PANTHER" id="PTHR18860">
    <property type="entry name" value="14-3-3 PROTEIN"/>
    <property type="match status" value="1"/>
</dbReference>
<dbReference type="Pfam" id="PF00244">
    <property type="entry name" value="14-3-3"/>
    <property type="match status" value="1"/>
</dbReference>
<dbReference type="PIRSF" id="PIRSF000868">
    <property type="entry name" value="14-3-3"/>
    <property type="match status" value="1"/>
</dbReference>
<dbReference type="PRINTS" id="PR00305">
    <property type="entry name" value="1433ZETA"/>
</dbReference>
<dbReference type="SMART" id="SM00101">
    <property type="entry name" value="14_3_3"/>
    <property type="match status" value="1"/>
</dbReference>
<dbReference type="SUPFAM" id="SSF48445">
    <property type="entry name" value="14-3-3 protein"/>
    <property type="match status" value="1"/>
</dbReference>
<dbReference type="PROSITE" id="PS00796">
    <property type="entry name" value="1433_1"/>
    <property type="match status" value="1"/>
</dbReference>
<dbReference type="PROSITE" id="PS00797">
    <property type="entry name" value="1433_2"/>
    <property type="match status" value="1"/>
</dbReference>
<feature type="chain" id="PRO_0000058637" description="14-3-3 protein theta">
    <location>
        <begin position="1"/>
        <end position="245"/>
    </location>
</feature>
<feature type="site" description="Interaction with phosphoserine on interacting protein" evidence="1">
    <location>
        <position position="56"/>
    </location>
</feature>
<feature type="site" description="Interaction with phosphoserine on interacting protein" evidence="1">
    <location>
        <position position="127"/>
    </location>
</feature>
<feature type="modified residue" description="N-acetylmethionine" evidence="2">
    <location>
        <position position="1"/>
    </location>
</feature>
<feature type="modified residue" description="N6-acetyllysine" evidence="2">
    <location>
        <position position="3"/>
    </location>
</feature>
<feature type="modified residue" description="N6-acetyllysine; alternate" evidence="2">
    <location>
        <position position="49"/>
    </location>
</feature>
<feature type="modified residue" description="N6-acetyllysine" evidence="2">
    <location>
        <position position="68"/>
    </location>
</feature>
<feature type="modified residue" description="3'-nitrotyrosine" evidence="3">
    <location>
        <position position="82"/>
    </location>
</feature>
<feature type="modified residue" description="Phosphoserine" evidence="8">
    <location>
        <position position="92"/>
    </location>
</feature>
<feature type="modified residue" description="3'-nitrotyrosine" evidence="3">
    <location>
        <position position="104"/>
    </location>
</feature>
<feature type="modified residue" description="N6-acetyllysine" evidence="2">
    <location>
        <position position="115"/>
    </location>
</feature>
<feature type="modified residue" description="Phosphoserine; by CK1" evidence="2 7">
    <location>
        <position position="232"/>
    </location>
</feature>
<feature type="cross-link" description="Glycyl lysine isopeptide (Lys-Gly) (interchain with G-Cter in SUMO2); alternate" evidence="2">
    <location>
        <position position="49"/>
    </location>
</feature>
<feature type="splice variant" id="VSP_016340" description="In isoform 2." evidence="6">
    <original>LWTSDSAGEECDAAEGAEN</original>
    <variation>FTCVELETVSVCFSLLS</variation>
    <location>
        <begin position="227"/>
        <end position="245"/>
    </location>
</feature>
<feature type="sequence conflict" description="In Ref. 4; BAE35397." evidence="7" ref="4">
    <original>M</original>
    <variation>I</variation>
    <location>
        <position position="26"/>
    </location>
</feature>
<feature type="sequence conflict" description="In Ref. 4; BAE27120." evidence="7" ref="4">
    <original>L</original>
    <variation>S</variation>
    <location>
        <position position="227"/>
    </location>
</feature>
<gene>
    <name type="primary">Ywhaq</name>
</gene>
<accession>P68254</accession>
<accession>P35216</accession>
<accession>Q3TW69</accession>
<accession>Q3UJN5</accession>
<accession>Q5SP76</accession>
<accession>Q5U423</accession>
<accession>Q66JR6</accession>
<reference key="1">
    <citation type="journal article" date="1997" name="Mol. Gen. Genet.">
        <title>The Cdk-like protein PCTAIRE-1 from mouse brain associates with p11 and 14-3-3 proteins.</title>
        <authorList>
            <person name="Sladeczek F."/>
            <person name="Camonis J.H."/>
            <person name="Burnol A.-F."/>
            <person name="Le Bouffant F."/>
        </authorList>
    </citation>
    <scope>NUCLEOTIDE SEQUENCE [MRNA] (ISOFORM 1)</scope>
    <scope>INTERACTION WITH CDK16</scope>
    <source>
        <tissue>Brain</tissue>
    </source>
</reference>
<reference key="2">
    <citation type="journal article" date="1997" name="Mol. Reprod. Dev.">
        <title>Molecular cloning and tissue-specific expression of the mouse homologue of the rat brain 14-3-3 theta protein: characterization of its cellular and developmental pattern of expression in the male germ line.</title>
        <authorList>
            <person name="Perego L."/>
            <person name="Berruti G."/>
        </authorList>
    </citation>
    <scope>NUCLEOTIDE SEQUENCE [MRNA] (ISOFORM 1)</scope>
</reference>
<reference key="3">
    <citation type="submission" date="1996-09" db="EMBL/GenBank/DDBJ databases">
        <title>14-3-3 family members play an important role in tumorigenic transformation of NIH 3T3 cells and retinoic acid-mediated F9 cell differentiation.</title>
        <authorList>
            <person name="Takihara Y."/>
            <person name="Irie K."/>
            <person name="Nomura M."/>
            <person name="Motaleb M."/>
            <person name="Matsumoto K."/>
            <person name="Shimada K."/>
        </authorList>
    </citation>
    <scope>NUCLEOTIDE SEQUENCE [MRNA] (ISOFORM 1)</scope>
    <source>
        <strain>129/Sv</strain>
    </source>
</reference>
<reference key="4">
    <citation type="journal article" date="2005" name="Science">
        <title>The transcriptional landscape of the mammalian genome.</title>
        <authorList>
            <person name="Carninci P."/>
            <person name="Kasukawa T."/>
            <person name="Katayama S."/>
            <person name="Gough J."/>
            <person name="Frith M.C."/>
            <person name="Maeda N."/>
            <person name="Oyama R."/>
            <person name="Ravasi T."/>
            <person name="Lenhard B."/>
            <person name="Wells C."/>
            <person name="Kodzius R."/>
            <person name="Shimokawa K."/>
            <person name="Bajic V.B."/>
            <person name="Brenner S.E."/>
            <person name="Batalov S."/>
            <person name="Forrest A.R."/>
            <person name="Zavolan M."/>
            <person name="Davis M.J."/>
            <person name="Wilming L.G."/>
            <person name="Aidinis V."/>
            <person name="Allen J.E."/>
            <person name="Ambesi-Impiombato A."/>
            <person name="Apweiler R."/>
            <person name="Aturaliya R.N."/>
            <person name="Bailey T.L."/>
            <person name="Bansal M."/>
            <person name="Baxter L."/>
            <person name="Beisel K.W."/>
            <person name="Bersano T."/>
            <person name="Bono H."/>
            <person name="Chalk A.M."/>
            <person name="Chiu K.P."/>
            <person name="Choudhary V."/>
            <person name="Christoffels A."/>
            <person name="Clutterbuck D.R."/>
            <person name="Crowe M.L."/>
            <person name="Dalla E."/>
            <person name="Dalrymple B.P."/>
            <person name="de Bono B."/>
            <person name="Della Gatta G."/>
            <person name="di Bernardo D."/>
            <person name="Down T."/>
            <person name="Engstrom P."/>
            <person name="Fagiolini M."/>
            <person name="Faulkner G."/>
            <person name="Fletcher C.F."/>
            <person name="Fukushima T."/>
            <person name="Furuno M."/>
            <person name="Futaki S."/>
            <person name="Gariboldi M."/>
            <person name="Georgii-Hemming P."/>
            <person name="Gingeras T.R."/>
            <person name="Gojobori T."/>
            <person name="Green R.E."/>
            <person name="Gustincich S."/>
            <person name="Harbers M."/>
            <person name="Hayashi Y."/>
            <person name="Hensch T.K."/>
            <person name="Hirokawa N."/>
            <person name="Hill D."/>
            <person name="Huminiecki L."/>
            <person name="Iacono M."/>
            <person name="Ikeo K."/>
            <person name="Iwama A."/>
            <person name="Ishikawa T."/>
            <person name="Jakt M."/>
            <person name="Kanapin A."/>
            <person name="Katoh M."/>
            <person name="Kawasawa Y."/>
            <person name="Kelso J."/>
            <person name="Kitamura H."/>
            <person name="Kitano H."/>
            <person name="Kollias G."/>
            <person name="Krishnan S.P."/>
            <person name="Kruger A."/>
            <person name="Kummerfeld S.K."/>
            <person name="Kurochkin I.V."/>
            <person name="Lareau L.F."/>
            <person name="Lazarevic D."/>
            <person name="Lipovich L."/>
            <person name="Liu J."/>
            <person name="Liuni S."/>
            <person name="McWilliam S."/>
            <person name="Madan Babu M."/>
            <person name="Madera M."/>
            <person name="Marchionni L."/>
            <person name="Matsuda H."/>
            <person name="Matsuzawa S."/>
            <person name="Miki H."/>
            <person name="Mignone F."/>
            <person name="Miyake S."/>
            <person name="Morris K."/>
            <person name="Mottagui-Tabar S."/>
            <person name="Mulder N."/>
            <person name="Nakano N."/>
            <person name="Nakauchi H."/>
            <person name="Ng P."/>
            <person name="Nilsson R."/>
            <person name="Nishiguchi S."/>
            <person name="Nishikawa S."/>
            <person name="Nori F."/>
            <person name="Ohara O."/>
            <person name="Okazaki Y."/>
            <person name="Orlando V."/>
            <person name="Pang K.C."/>
            <person name="Pavan W.J."/>
            <person name="Pavesi G."/>
            <person name="Pesole G."/>
            <person name="Petrovsky N."/>
            <person name="Piazza S."/>
            <person name="Reed J."/>
            <person name="Reid J.F."/>
            <person name="Ring B.Z."/>
            <person name="Ringwald M."/>
            <person name="Rost B."/>
            <person name="Ruan Y."/>
            <person name="Salzberg S.L."/>
            <person name="Sandelin A."/>
            <person name="Schneider C."/>
            <person name="Schoenbach C."/>
            <person name="Sekiguchi K."/>
            <person name="Semple C.A."/>
            <person name="Seno S."/>
            <person name="Sessa L."/>
            <person name="Sheng Y."/>
            <person name="Shibata Y."/>
            <person name="Shimada H."/>
            <person name="Shimada K."/>
            <person name="Silva D."/>
            <person name="Sinclair B."/>
            <person name="Sperling S."/>
            <person name="Stupka E."/>
            <person name="Sugiura K."/>
            <person name="Sultana R."/>
            <person name="Takenaka Y."/>
            <person name="Taki K."/>
            <person name="Tammoja K."/>
            <person name="Tan S.L."/>
            <person name="Tang S."/>
            <person name="Taylor M.S."/>
            <person name="Tegner J."/>
            <person name="Teichmann S.A."/>
            <person name="Ueda H.R."/>
            <person name="van Nimwegen E."/>
            <person name="Verardo R."/>
            <person name="Wei C.L."/>
            <person name="Yagi K."/>
            <person name="Yamanishi H."/>
            <person name="Zabarovsky E."/>
            <person name="Zhu S."/>
            <person name="Zimmer A."/>
            <person name="Hide W."/>
            <person name="Bult C."/>
            <person name="Grimmond S.M."/>
            <person name="Teasdale R.D."/>
            <person name="Liu E.T."/>
            <person name="Brusic V."/>
            <person name="Quackenbush J."/>
            <person name="Wahlestedt C."/>
            <person name="Mattick J.S."/>
            <person name="Hume D.A."/>
            <person name="Kai C."/>
            <person name="Sasaki D."/>
            <person name="Tomaru Y."/>
            <person name="Fukuda S."/>
            <person name="Kanamori-Katayama M."/>
            <person name="Suzuki M."/>
            <person name="Aoki J."/>
            <person name="Arakawa T."/>
            <person name="Iida J."/>
            <person name="Imamura K."/>
            <person name="Itoh M."/>
            <person name="Kato T."/>
            <person name="Kawaji H."/>
            <person name="Kawagashira N."/>
            <person name="Kawashima T."/>
            <person name="Kojima M."/>
            <person name="Kondo S."/>
            <person name="Konno H."/>
            <person name="Nakano K."/>
            <person name="Ninomiya N."/>
            <person name="Nishio T."/>
            <person name="Okada M."/>
            <person name="Plessy C."/>
            <person name="Shibata K."/>
            <person name="Shiraki T."/>
            <person name="Suzuki S."/>
            <person name="Tagami M."/>
            <person name="Waki K."/>
            <person name="Watahiki A."/>
            <person name="Okamura-Oho Y."/>
            <person name="Suzuki H."/>
            <person name="Kawai J."/>
            <person name="Hayashizaki Y."/>
        </authorList>
    </citation>
    <scope>NUCLEOTIDE SEQUENCE [LARGE SCALE MRNA] (ISOFORM 1)</scope>
    <source>
        <strain>C57BL/6J</strain>
        <tissue>Amnion</tissue>
        <tissue>Blastocyst</tissue>
        <tissue>Bone marrow</tissue>
        <tissue>Egg</tissue>
    </source>
</reference>
<reference key="5">
    <citation type="journal article" date="2009" name="PLoS Biol.">
        <title>Lineage-specific biology revealed by a finished genome assembly of the mouse.</title>
        <authorList>
            <person name="Church D.M."/>
            <person name="Goodstadt L."/>
            <person name="Hillier L.W."/>
            <person name="Zody M.C."/>
            <person name="Goldstein S."/>
            <person name="She X."/>
            <person name="Bult C.J."/>
            <person name="Agarwala R."/>
            <person name="Cherry J.L."/>
            <person name="DiCuccio M."/>
            <person name="Hlavina W."/>
            <person name="Kapustin Y."/>
            <person name="Meric P."/>
            <person name="Maglott D."/>
            <person name="Birtle Z."/>
            <person name="Marques A.C."/>
            <person name="Graves T."/>
            <person name="Zhou S."/>
            <person name="Teague B."/>
            <person name="Potamousis K."/>
            <person name="Churas C."/>
            <person name="Place M."/>
            <person name="Herschleb J."/>
            <person name="Runnheim R."/>
            <person name="Forrest D."/>
            <person name="Amos-Landgraf J."/>
            <person name="Schwartz D.C."/>
            <person name="Cheng Z."/>
            <person name="Lindblad-Toh K."/>
            <person name="Eichler E.E."/>
            <person name="Ponting C.P."/>
        </authorList>
    </citation>
    <scope>NUCLEOTIDE SEQUENCE [LARGE SCALE GENOMIC DNA]</scope>
    <source>
        <strain>C57BL/6J</strain>
    </source>
</reference>
<reference key="6">
    <citation type="journal article" date="2004" name="Genome Res.">
        <title>The status, quality, and expansion of the NIH full-length cDNA project: the Mammalian Gene Collection (MGC).</title>
        <authorList>
            <consortium name="The MGC Project Team"/>
        </authorList>
    </citation>
    <scope>NUCLEOTIDE SEQUENCE [LARGE SCALE MRNA] (ISOFORMS 1 AND 2)</scope>
    <source>
        <strain>C57BL/6J</strain>
        <strain>FVB/N</strain>
        <tissue>Brain</tissue>
        <tissue>Mammary tumor</tissue>
        <tissue>Olfactory epithelium</tissue>
    </source>
</reference>
<reference key="7">
    <citation type="submission" date="2009-01" db="UniProtKB">
        <authorList>
            <person name="Lubec G."/>
            <person name="Kang S.U."/>
            <person name="Sunyer B."/>
            <person name="Chen W.-Q."/>
        </authorList>
    </citation>
    <scope>PROTEIN SEQUENCE OF 12-49; 61-68; 75-80; 84-115; 128-167 AND 194-245</scope>
    <scope>IDENTIFICATION BY MASS SPECTROMETRY</scope>
    <source>
        <strain>C57BL/6J</strain>
        <strain>OF1</strain>
        <tissue>Brain</tissue>
        <tissue>Hippocampus</tissue>
    </source>
</reference>
<reference key="8">
    <citation type="journal article" date="2010" name="Cell">
        <title>A tissue-specific atlas of mouse protein phosphorylation and expression.</title>
        <authorList>
            <person name="Huttlin E.L."/>
            <person name="Jedrychowski M.P."/>
            <person name="Elias J.E."/>
            <person name="Goswami T."/>
            <person name="Rad R."/>
            <person name="Beausoleil S.A."/>
            <person name="Villen J."/>
            <person name="Haas W."/>
            <person name="Sowa M.E."/>
            <person name="Gygi S.P."/>
        </authorList>
    </citation>
    <scope>PHOSPHORYLATION [LARGE SCALE ANALYSIS] AT SER-92</scope>
    <scope>IDENTIFICATION BY MASS SPECTROMETRY [LARGE SCALE ANALYSIS]</scope>
    <source>
        <tissue>Brain</tissue>
        <tissue>Brown adipose tissue</tissue>
        <tissue>Heart</tissue>
        <tissue>Kidney</tissue>
        <tissue>Liver</tissue>
        <tissue>Lung</tissue>
        <tissue>Pancreas</tissue>
        <tissue>Spleen</tissue>
        <tissue>Testis</tissue>
    </source>
</reference>
<reference key="9">
    <citation type="journal article" date="2015" name="Biochem. Biophys. Res. Commun.">
        <title>Suppression of death-associated protein kinase 2 by interaction with 14-3-3 proteins.</title>
        <authorList>
            <person name="Yuasa K."/>
            <person name="Ota R."/>
            <person name="Matsuda S."/>
            <person name="Isshiki K."/>
            <person name="Inoue M."/>
            <person name="Tsuji A."/>
        </authorList>
    </citation>
    <scope>INTERACTION WITH DAPK2</scope>
</reference>
<organism>
    <name type="scientific">Mus musculus</name>
    <name type="common">Mouse</name>
    <dbReference type="NCBI Taxonomy" id="10090"/>
    <lineage>
        <taxon>Eukaryota</taxon>
        <taxon>Metazoa</taxon>
        <taxon>Chordata</taxon>
        <taxon>Craniata</taxon>
        <taxon>Vertebrata</taxon>
        <taxon>Euteleostomi</taxon>
        <taxon>Mammalia</taxon>
        <taxon>Eutheria</taxon>
        <taxon>Euarchontoglires</taxon>
        <taxon>Glires</taxon>
        <taxon>Rodentia</taxon>
        <taxon>Myomorpha</taxon>
        <taxon>Muroidea</taxon>
        <taxon>Muridae</taxon>
        <taxon>Murinae</taxon>
        <taxon>Mus</taxon>
        <taxon>Mus</taxon>
    </lineage>
</organism>
<proteinExistence type="evidence at protein level"/>
<name>1433T_MOUSE</name>
<sequence>MEKTELIQKAKLAEQAERYDDMATCMKAVTEQGAELSNEERNLLSVAYKNVVGGRRSAWRVISSIEQKTDTSDKKLQLIKDYREKVESELRSICTTVLELLDKYLIANATNPESKVFYLKMKGDYFRYLAEVACGDDRKQTIENSQGAYQEAFDISKKEMQPTHPIRLGLALNFSVFYYEILNNPELACTLAKTAFDEAIAELDTLNEDSYKDSTLIMQLLRDNLTLWTSDSAGEECDAAEGAEN</sequence>
<protein>
    <recommendedName>
        <fullName>14-3-3 protein theta</fullName>
    </recommendedName>
    <alternativeName>
        <fullName>14-3-3 protein tau</fullName>
    </alternativeName>
</protein>
<evidence type="ECO:0000250" key="1"/>
<evidence type="ECO:0000250" key="2">
    <source>
        <dbReference type="UniProtKB" id="P27348"/>
    </source>
</evidence>
<evidence type="ECO:0000250" key="3">
    <source>
        <dbReference type="UniProtKB" id="Q9CQV8"/>
    </source>
</evidence>
<evidence type="ECO:0000269" key="4">
    <source>
    </source>
</evidence>
<evidence type="ECO:0000269" key="5">
    <source>
    </source>
</evidence>
<evidence type="ECO:0000303" key="6">
    <source>
    </source>
</evidence>
<evidence type="ECO:0000305" key="7"/>
<evidence type="ECO:0007744" key="8">
    <source>
    </source>
</evidence>
<keyword id="KW-0007">Acetylation</keyword>
<keyword id="KW-0025">Alternative splicing</keyword>
<keyword id="KW-0963">Cytoplasm</keyword>
<keyword id="KW-0903">Direct protein sequencing</keyword>
<keyword id="KW-1017">Isopeptide bond</keyword>
<keyword id="KW-0944">Nitration</keyword>
<keyword id="KW-0597">Phosphoprotein</keyword>
<keyword id="KW-1185">Reference proteome</keyword>
<keyword id="KW-0832">Ubl conjugation</keyword>